<sequence length="353" mass="41063">MYGPFLLKEFLNDVPLKPMHNTRMMAEAKFDFEEKKTQKSAATIENHSNRSCRDWLADMGMVFSKSQLCTKFDNRFRDAKAAQTIVCFQHSVLCRFAPYMRYIEKKLNEVLPATFYIHSGKGLEELNKWVIESKFEGVCTESDYEAFDASQDQYIVAFELALMRYLGLPNDLIEDYKYIKTHLGSKLGNFAIMRFSGEASTFLFNTMANMLFTFLRYKLKGDERICFAGDDMCANRALFIKDTHEGFLKKLKLKAKVDRTNRPSFCGWSLSSDGIYKKPQLVFERLCIAKETANLANCIDNYAIEVSYAYKLGERIKERMSEEELEAFYNCVRVIIKHKHLLKSEIRSVYEEV</sequence>
<reference key="1">
    <citation type="journal article" date="1989" name="J. Gen. Virol.">
        <title>Organization and interviral homologies of the 3'-terminal portion of potato virus S RNA.</title>
        <authorList>
            <person name="Mackenzie D.J."/>
            <person name="Tremaine J.H."/>
            <person name="Stace-Smith R."/>
        </authorList>
    </citation>
    <scope>NUCLEOTIDE SEQUENCE [GENOMIC RNA]</scope>
</reference>
<organism>
    <name type="scientific">Potato virus S (strain Peruvian)</name>
    <dbReference type="NCBI Taxonomy" id="12170"/>
    <lineage>
        <taxon>Viruses</taxon>
        <taxon>Riboviria</taxon>
        <taxon>Orthornavirae</taxon>
        <taxon>Kitrinoviricota</taxon>
        <taxon>Alsuviricetes</taxon>
        <taxon>Tymovirales</taxon>
        <taxon>Betaflexiviridae</taxon>
        <taxon>Quinvirinae</taxon>
        <taxon>Carlavirus</taxon>
        <taxon>Potato virus S</taxon>
    </lineage>
</organism>
<keyword id="KW-0067">ATP-binding</keyword>
<keyword id="KW-0347">Helicase</keyword>
<keyword id="KW-0378">Hydrolase</keyword>
<keyword id="KW-0511">Multifunctional enzyme</keyword>
<keyword id="KW-0547">Nucleotide-binding</keyword>
<keyword id="KW-0548">Nucleotidyltransferase</keyword>
<keyword id="KW-0696">RNA-directed RNA polymerase</keyword>
<keyword id="KW-0808">Transferase</keyword>
<keyword id="KW-0693">Viral RNA replication</keyword>
<evidence type="ECO:0000255" key="1">
    <source>
        <dbReference type="PROSITE-ProRule" id="PRU00539"/>
    </source>
</evidence>
<evidence type="ECO:0000305" key="2"/>
<name>RDRP_PVSP</name>
<protein>
    <recommendedName>
        <fullName>RNA replication protein</fullName>
    </recommendedName>
    <alternativeName>
        <fullName>152 kDa protein</fullName>
    </alternativeName>
    <alternativeName>
        <fullName>ORF1 protein</fullName>
    </alternativeName>
    <domain>
        <recommendedName>
            <fullName>RNA-directed RNA polymerase</fullName>
            <ecNumber>2.7.7.48</ecNumber>
        </recommendedName>
    </domain>
    <domain>
        <recommendedName>
            <fullName>Helicase</fullName>
            <ecNumber>3.6.4.13</ecNumber>
        </recommendedName>
    </domain>
</protein>
<organismHost>
    <name type="scientific">Solanum tuberosum</name>
    <name type="common">Potato</name>
    <dbReference type="NCBI Taxonomy" id="4113"/>
</organismHost>
<dbReference type="EC" id="2.7.7.48"/>
<dbReference type="EC" id="3.6.4.13"/>
<dbReference type="EMBL" id="D00461">
    <property type="protein sequence ID" value="BAA00350.1"/>
    <property type="molecule type" value="Genomic_RNA"/>
</dbReference>
<dbReference type="PIR" id="JA0123">
    <property type="entry name" value="JA0123"/>
</dbReference>
<dbReference type="GO" id="GO:0005524">
    <property type="term" value="F:ATP binding"/>
    <property type="evidence" value="ECO:0007669"/>
    <property type="project" value="UniProtKB-KW"/>
</dbReference>
<dbReference type="GO" id="GO:0016887">
    <property type="term" value="F:ATP hydrolysis activity"/>
    <property type="evidence" value="ECO:0007669"/>
    <property type="project" value="RHEA"/>
</dbReference>
<dbReference type="GO" id="GO:0003723">
    <property type="term" value="F:RNA binding"/>
    <property type="evidence" value="ECO:0007669"/>
    <property type="project" value="InterPro"/>
</dbReference>
<dbReference type="GO" id="GO:0003724">
    <property type="term" value="F:RNA helicase activity"/>
    <property type="evidence" value="ECO:0007669"/>
    <property type="project" value="UniProtKB-EC"/>
</dbReference>
<dbReference type="GO" id="GO:0003968">
    <property type="term" value="F:RNA-directed RNA polymerase activity"/>
    <property type="evidence" value="ECO:0007669"/>
    <property type="project" value="UniProtKB-KW"/>
</dbReference>
<dbReference type="GO" id="GO:0006351">
    <property type="term" value="P:DNA-templated transcription"/>
    <property type="evidence" value="ECO:0007669"/>
    <property type="project" value="InterPro"/>
</dbReference>
<dbReference type="GO" id="GO:0039694">
    <property type="term" value="P:viral RNA genome replication"/>
    <property type="evidence" value="ECO:0007669"/>
    <property type="project" value="InterPro"/>
</dbReference>
<dbReference type="CDD" id="cd23245">
    <property type="entry name" value="Betaflexiviridae_RdRp"/>
    <property type="match status" value="1"/>
</dbReference>
<dbReference type="InterPro" id="IPR043502">
    <property type="entry name" value="DNA/RNA_pol_sf"/>
</dbReference>
<dbReference type="InterPro" id="IPR001788">
    <property type="entry name" value="RNA-dep_RNA_pol_alsuvir"/>
</dbReference>
<dbReference type="InterPro" id="IPR007094">
    <property type="entry name" value="RNA-dir_pol_PSvirus"/>
</dbReference>
<dbReference type="Pfam" id="PF00978">
    <property type="entry name" value="RdRP_2"/>
    <property type="match status" value="1"/>
</dbReference>
<dbReference type="SUPFAM" id="SSF56672">
    <property type="entry name" value="DNA/RNA polymerases"/>
    <property type="match status" value="1"/>
</dbReference>
<dbReference type="PROSITE" id="PS50507">
    <property type="entry name" value="RDRP_SSRNA_POS"/>
    <property type="match status" value="1"/>
</dbReference>
<feature type="chain" id="PRO_0000222562" description="RNA replication protein">
    <location>
        <begin position="1" status="less than"/>
        <end position="353"/>
    </location>
</feature>
<feature type="domain" description="RdRp catalytic" evidence="1">
    <location>
        <begin position="137"/>
        <end position="244"/>
    </location>
</feature>
<feature type="non-terminal residue">
    <location>
        <position position="1"/>
    </location>
</feature>
<proteinExistence type="inferred from homology"/>
<comment type="function">
    <text>RNA replication. The central part of this protein possibly functions as an ATP-binding helicase.</text>
</comment>
<comment type="catalytic activity">
    <reaction evidence="1">
        <text>RNA(n) + a ribonucleoside 5'-triphosphate = RNA(n+1) + diphosphate</text>
        <dbReference type="Rhea" id="RHEA:21248"/>
        <dbReference type="Rhea" id="RHEA-COMP:14527"/>
        <dbReference type="Rhea" id="RHEA-COMP:17342"/>
        <dbReference type="ChEBI" id="CHEBI:33019"/>
        <dbReference type="ChEBI" id="CHEBI:61557"/>
        <dbReference type="ChEBI" id="CHEBI:140395"/>
        <dbReference type="EC" id="2.7.7.48"/>
    </reaction>
</comment>
<comment type="catalytic activity">
    <reaction>
        <text>ATP + H2O = ADP + phosphate + H(+)</text>
        <dbReference type="Rhea" id="RHEA:13065"/>
        <dbReference type="ChEBI" id="CHEBI:15377"/>
        <dbReference type="ChEBI" id="CHEBI:15378"/>
        <dbReference type="ChEBI" id="CHEBI:30616"/>
        <dbReference type="ChEBI" id="CHEBI:43474"/>
        <dbReference type="ChEBI" id="CHEBI:456216"/>
        <dbReference type="EC" id="3.6.4.13"/>
    </reaction>
</comment>
<comment type="similarity">
    <text evidence="2">Belongs to the potexviruses/carlaviruses RNA replication protein family.</text>
</comment>
<accession>P22657</accession>